<proteinExistence type="inferred from homology"/>
<feature type="chain" id="PRO_0000321313" description="Argininosuccinate synthase">
    <location>
        <begin position="1"/>
        <end position="406"/>
    </location>
</feature>
<feature type="binding site" evidence="1">
    <location>
        <begin position="13"/>
        <end position="21"/>
    </location>
    <ligand>
        <name>ATP</name>
        <dbReference type="ChEBI" id="CHEBI:30616"/>
    </ligand>
</feature>
<feature type="binding site" evidence="1">
    <location>
        <position position="40"/>
    </location>
    <ligand>
        <name>ATP</name>
        <dbReference type="ChEBI" id="CHEBI:30616"/>
    </ligand>
</feature>
<feature type="binding site" evidence="1">
    <location>
        <position position="91"/>
    </location>
    <ligand>
        <name>L-citrulline</name>
        <dbReference type="ChEBI" id="CHEBI:57743"/>
    </ligand>
</feature>
<feature type="binding site" evidence="1">
    <location>
        <position position="96"/>
    </location>
    <ligand>
        <name>L-citrulline</name>
        <dbReference type="ChEBI" id="CHEBI:57743"/>
    </ligand>
</feature>
<feature type="binding site" evidence="1">
    <location>
        <position position="121"/>
    </location>
    <ligand>
        <name>ATP</name>
        <dbReference type="ChEBI" id="CHEBI:30616"/>
    </ligand>
</feature>
<feature type="binding site" evidence="1">
    <location>
        <position position="123"/>
    </location>
    <ligand>
        <name>L-aspartate</name>
        <dbReference type="ChEBI" id="CHEBI:29991"/>
    </ligand>
</feature>
<feature type="binding site" evidence="1">
    <location>
        <position position="127"/>
    </location>
    <ligand>
        <name>L-aspartate</name>
        <dbReference type="ChEBI" id="CHEBI:29991"/>
    </ligand>
</feature>
<feature type="binding site" evidence="1">
    <location>
        <position position="127"/>
    </location>
    <ligand>
        <name>L-citrulline</name>
        <dbReference type="ChEBI" id="CHEBI:57743"/>
    </ligand>
</feature>
<feature type="binding site" evidence="1">
    <location>
        <position position="128"/>
    </location>
    <ligand>
        <name>L-aspartate</name>
        <dbReference type="ChEBI" id="CHEBI:29991"/>
    </ligand>
</feature>
<feature type="binding site" evidence="1">
    <location>
        <position position="131"/>
    </location>
    <ligand>
        <name>L-citrulline</name>
        <dbReference type="ChEBI" id="CHEBI:57743"/>
    </ligand>
</feature>
<feature type="binding site" evidence="1">
    <location>
        <position position="182"/>
    </location>
    <ligand>
        <name>L-citrulline</name>
        <dbReference type="ChEBI" id="CHEBI:57743"/>
    </ligand>
</feature>
<feature type="binding site" evidence="1">
    <location>
        <position position="191"/>
    </location>
    <ligand>
        <name>L-citrulline</name>
        <dbReference type="ChEBI" id="CHEBI:57743"/>
    </ligand>
</feature>
<feature type="binding site" evidence="1">
    <location>
        <position position="267"/>
    </location>
    <ligand>
        <name>L-citrulline</name>
        <dbReference type="ChEBI" id="CHEBI:57743"/>
    </ligand>
</feature>
<feature type="binding site" evidence="1">
    <location>
        <position position="279"/>
    </location>
    <ligand>
        <name>L-citrulline</name>
        <dbReference type="ChEBI" id="CHEBI:57743"/>
    </ligand>
</feature>
<comment type="catalytic activity">
    <reaction evidence="1">
        <text>L-citrulline + L-aspartate + ATP = 2-(N(omega)-L-arginino)succinate + AMP + diphosphate + H(+)</text>
        <dbReference type="Rhea" id="RHEA:10932"/>
        <dbReference type="ChEBI" id="CHEBI:15378"/>
        <dbReference type="ChEBI" id="CHEBI:29991"/>
        <dbReference type="ChEBI" id="CHEBI:30616"/>
        <dbReference type="ChEBI" id="CHEBI:33019"/>
        <dbReference type="ChEBI" id="CHEBI:57472"/>
        <dbReference type="ChEBI" id="CHEBI:57743"/>
        <dbReference type="ChEBI" id="CHEBI:456215"/>
        <dbReference type="EC" id="6.3.4.5"/>
    </reaction>
</comment>
<comment type="pathway">
    <text evidence="1">Amino-acid biosynthesis; L-arginine biosynthesis; L-arginine from L-ornithine and carbamoyl phosphate: step 2/3.</text>
</comment>
<comment type="subunit">
    <text evidence="1">Homotetramer.</text>
</comment>
<comment type="subcellular location">
    <subcellularLocation>
        <location evidence="1">Cytoplasm</location>
    </subcellularLocation>
</comment>
<comment type="similarity">
    <text evidence="1">Belongs to the argininosuccinate synthase family. Type 1 subfamily.</text>
</comment>
<comment type="sequence caution" evidence="2">
    <conflict type="erroneous initiation">
        <sequence resource="EMBL-CDS" id="ABS12817"/>
    </conflict>
</comment>
<protein>
    <recommendedName>
        <fullName evidence="1">Argininosuccinate synthase</fullName>
        <ecNumber evidence="1">6.3.4.5</ecNumber>
    </recommendedName>
    <alternativeName>
        <fullName evidence="1">Citrulline--aspartate ligase</fullName>
    </alternativeName>
</protein>
<organism>
    <name type="scientific">Brucella anthropi (strain ATCC 49188 / DSM 6882 / CCUG 24695 / JCM 21032 / LMG 3331 / NBRC 15819 / NCTC 12168 / Alc 37)</name>
    <name type="common">Ochrobactrum anthropi</name>
    <dbReference type="NCBI Taxonomy" id="439375"/>
    <lineage>
        <taxon>Bacteria</taxon>
        <taxon>Pseudomonadati</taxon>
        <taxon>Pseudomonadota</taxon>
        <taxon>Alphaproteobacteria</taxon>
        <taxon>Hyphomicrobiales</taxon>
        <taxon>Brucellaceae</taxon>
        <taxon>Brucella/Ochrobactrum group</taxon>
        <taxon>Brucella</taxon>
    </lineage>
</organism>
<accession>A6WV13</accession>
<evidence type="ECO:0000255" key="1">
    <source>
        <dbReference type="HAMAP-Rule" id="MF_00005"/>
    </source>
</evidence>
<evidence type="ECO:0000305" key="2"/>
<name>ASSY_BRUA4</name>
<reference key="1">
    <citation type="journal article" date="2011" name="J. Bacteriol.">
        <title>Genome of Ochrobactrum anthropi ATCC 49188 T, a versatile opportunistic pathogen and symbiont of several eukaryotic hosts.</title>
        <authorList>
            <person name="Chain P.S."/>
            <person name="Lang D.M."/>
            <person name="Comerci D.J."/>
            <person name="Malfatti S.A."/>
            <person name="Vergez L.M."/>
            <person name="Shin M."/>
            <person name="Ugalde R.A."/>
            <person name="Garcia E."/>
            <person name="Tolmasky M.E."/>
        </authorList>
    </citation>
    <scope>NUCLEOTIDE SEQUENCE [LARGE SCALE GENOMIC DNA]</scope>
    <source>
        <strain>ATCC 49188 / DSM 6882 / CCUG 24695 / JCM 21032 / LMG 3331 / NBRC 15819 / NCTC 12168 / Alc 37</strain>
    </source>
</reference>
<dbReference type="EC" id="6.3.4.5" evidence="1"/>
<dbReference type="EMBL" id="CP000758">
    <property type="protein sequence ID" value="ABS12817.1"/>
    <property type="status" value="ALT_INIT"/>
    <property type="molecule type" value="Genomic_DNA"/>
</dbReference>
<dbReference type="RefSeq" id="WP_040129026.1">
    <property type="nucleotide sequence ID" value="NC_009667.1"/>
</dbReference>
<dbReference type="SMR" id="A6WV13"/>
<dbReference type="STRING" id="439375.Oant_0086"/>
<dbReference type="KEGG" id="oan:Oant_0086"/>
<dbReference type="PATRIC" id="fig|439375.7.peg.88"/>
<dbReference type="eggNOG" id="COG0137">
    <property type="taxonomic scope" value="Bacteria"/>
</dbReference>
<dbReference type="HOGENOM" id="CLU_032784_4_2_5"/>
<dbReference type="PhylomeDB" id="A6WV13"/>
<dbReference type="UniPathway" id="UPA00068">
    <property type="reaction ID" value="UER00113"/>
</dbReference>
<dbReference type="Proteomes" id="UP000002301">
    <property type="component" value="Chromosome 1"/>
</dbReference>
<dbReference type="GO" id="GO:0005737">
    <property type="term" value="C:cytoplasm"/>
    <property type="evidence" value="ECO:0007669"/>
    <property type="project" value="UniProtKB-SubCell"/>
</dbReference>
<dbReference type="GO" id="GO:0004055">
    <property type="term" value="F:argininosuccinate synthase activity"/>
    <property type="evidence" value="ECO:0007669"/>
    <property type="project" value="UniProtKB-UniRule"/>
</dbReference>
<dbReference type="GO" id="GO:0005524">
    <property type="term" value="F:ATP binding"/>
    <property type="evidence" value="ECO:0007669"/>
    <property type="project" value="UniProtKB-UniRule"/>
</dbReference>
<dbReference type="GO" id="GO:0000053">
    <property type="term" value="P:argininosuccinate metabolic process"/>
    <property type="evidence" value="ECO:0007669"/>
    <property type="project" value="TreeGrafter"/>
</dbReference>
<dbReference type="GO" id="GO:0006526">
    <property type="term" value="P:L-arginine biosynthetic process"/>
    <property type="evidence" value="ECO:0007669"/>
    <property type="project" value="UniProtKB-UniRule"/>
</dbReference>
<dbReference type="GO" id="GO:0000050">
    <property type="term" value="P:urea cycle"/>
    <property type="evidence" value="ECO:0007669"/>
    <property type="project" value="TreeGrafter"/>
</dbReference>
<dbReference type="CDD" id="cd01999">
    <property type="entry name" value="ASS"/>
    <property type="match status" value="1"/>
</dbReference>
<dbReference type="FunFam" id="3.40.50.620:FF:000019">
    <property type="entry name" value="Argininosuccinate synthase"/>
    <property type="match status" value="1"/>
</dbReference>
<dbReference type="FunFam" id="3.90.1260.10:FF:000007">
    <property type="entry name" value="Argininosuccinate synthase"/>
    <property type="match status" value="1"/>
</dbReference>
<dbReference type="Gene3D" id="3.90.1260.10">
    <property type="entry name" value="Argininosuccinate synthetase, chain A, domain 2"/>
    <property type="match status" value="1"/>
</dbReference>
<dbReference type="Gene3D" id="3.40.50.620">
    <property type="entry name" value="HUPs"/>
    <property type="match status" value="1"/>
</dbReference>
<dbReference type="Gene3D" id="1.20.5.470">
    <property type="entry name" value="Single helix bin"/>
    <property type="match status" value="1"/>
</dbReference>
<dbReference type="HAMAP" id="MF_00005">
    <property type="entry name" value="Arg_succ_synth_type1"/>
    <property type="match status" value="1"/>
</dbReference>
<dbReference type="InterPro" id="IPR048268">
    <property type="entry name" value="Arginosuc_syn_C"/>
</dbReference>
<dbReference type="InterPro" id="IPR048267">
    <property type="entry name" value="Arginosuc_syn_N"/>
</dbReference>
<dbReference type="InterPro" id="IPR001518">
    <property type="entry name" value="Arginosuc_synth"/>
</dbReference>
<dbReference type="InterPro" id="IPR018223">
    <property type="entry name" value="Arginosuc_synth_CS"/>
</dbReference>
<dbReference type="InterPro" id="IPR023434">
    <property type="entry name" value="Arginosuc_synth_type_1_subfam"/>
</dbReference>
<dbReference type="InterPro" id="IPR024074">
    <property type="entry name" value="AS_cat/multimer_dom_body"/>
</dbReference>
<dbReference type="InterPro" id="IPR014729">
    <property type="entry name" value="Rossmann-like_a/b/a_fold"/>
</dbReference>
<dbReference type="NCBIfam" id="TIGR00032">
    <property type="entry name" value="argG"/>
    <property type="match status" value="1"/>
</dbReference>
<dbReference type="NCBIfam" id="NF001770">
    <property type="entry name" value="PRK00509.1"/>
    <property type="match status" value="1"/>
</dbReference>
<dbReference type="PANTHER" id="PTHR11587">
    <property type="entry name" value="ARGININOSUCCINATE SYNTHASE"/>
    <property type="match status" value="1"/>
</dbReference>
<dbReference type="PANTHER" id="PTHR11587:SF2">
    <property type="entry name" value="ARGININOSUCCINATE SYNTHASE"/>
    <property type="match status" value="1"/>
</dbReference>
<dbReference type="Pfam" id="PF20979">
    <property type="entry name" value="Arginosuc_syn_C"/>
    <property type="match status" value="1"/>
</dbReference>
<dbReference type="Pfam" id="PF00764">
    <property type="entry name" value="Arginosuc_synth"/>
    <property type="match status" value="1"/>
</dbReference>
<dbReference type="SUPFAM" id="SSF52402">
    <property type="entry name" value="Adenine nucleotide alpha hydrolases-like"/>
    <property type="match status" value="1"/>
</dbReference>
<dbReference type="SUPFAM" id="SSF69864">
    <property type="entry name" value="Argininosuccinate synthetase, C-terminal domain"/>
    <property type="match status" value="1"/>
</dbReference>
<dbReference type="PROSITE" id="PS00564">
    <property type="entry name" value="ARGININOSUCCIN_SYN_1"/>
    <property type="match status" value="1"/>
</dbReference>
<dbReference type="PROSITE" id="PS00565">
    <property type="entry name" value="ARGININOSUCCIN_SYN_2"/>
    <property type="match status" value="1"/>
</dbReference>
<keyword id="KW-0028">Amino-acid biosynthesis</keyword>
<keyword id="KW-0055">Arginine biosynthesis</keyword>
<keyword id="KW-0067">ATP-binding</keyword>
<keyword id="KW-0963">Cytoplasm</keyword>
<keyword id="KW-0436">Ligase</keyword>
<keyword id="KW-0547">Nucleotide-binding</keyword>
<keyword id="KW-1185">Reference proteome</keyword>
<sequence>MSKWKDVKKVVLAYSGGLDTSIILKWLQTELGAEVVTFTADLGQGEELEPARKKAEMLGIKEIFIEDVREEFVRDFVFPMFRANAVYEGVYLLGTSIARPLISKHLIEIARKTGADAIAHGATGKGNDQVRFELSAYALNPDIKIIAPWRDWSFKSRTHLLEFAEQHQIPVAKDKKGEAPFSVDANLLHSSSEGKVLEDPAVEAPEYVHMRTISPETAPDKATIIKIGFEKGDAVSINGERLSPATLLAKLNDYGRDNGIGRLDLVENRFVGMKSRGVYETPGGTILLAAHRAIESITLDRGAAHLKDELMPRYAELIYYGFWFSPEREMLQAAIDHSQRHVEGEVTLKLYKGNVMVIGRESDKSLYSDKLVTFEDDQGAYDQKDAAGFIKLNALRLRTLAARDRK</sequence>
<gene>
    <name evidence="1" type="primary">argG</name>
    <name type="ordered locus">Oant_0086</name>
</gene>